<proteinExistence type="inferred from homology"/>
<feature type="chain" id="PRO_0000375027" description="Ribosomal protein uS12 methylthiotransferase RimO">
    <location>
        <begin position="1"/>
        <end position="439"/>
    </location>
</feature>
<feature type="domain" description="MTTase N-terminal" evidence="1">
    <location>
        <begin position="5"/>
        <end position="117"/>
    </location>
</feature>
<feature type="domain" description="Radical SAM core" evidence="2">
    <location>
        <begin position="135"/>
        <end position="363"/>
    </location>
</feature>
<feature type="domain" description="TRAM" evidence="1">
    <location>
        <begin position="366"/>
        <end position="437"/>
    </location>
</feature>
<feature type="binding site" evidence="1">
    <location>
        <position position="14"/>
    </location>
    <ligand>
        <name>[4Fe-4S] cluster</name>
        <dbReference type="ChEBI" id="CHEBI:49883"/>
        <label>1</label>
    </ligand>
</feature>
<feature type="binding site" evidence="1">
    <location>
        <position position="48"/>
    </location>
    <ligand>
        <name>[4Fe-4S] cluster</name>
        <dbReference type="ChEBI" id="CHEBI:49883"/>
        <label>1</label>
    </ligand>
</feature>
<feature type="binding site" evidence="1">
    <location>
        <position position="80"/>
    </location>
    <ligand>
        <name>[4Fe-4S] cluster</name>
        <dbReference type="ChEBI" id="CHEBI:49883"/>
        <label>1</label>
    </ligand>
</feature>
<feature type="binding site" evidence="1">
    <location>
        <position position="149"/>
    </location>
    <ligand>
        <name>[4Fe-4S] cluster</name>
        <dbReference type="ChEBI" id="CHEBI:49883"/>
        <label>2</label>
        <note>4Fe-4S-S-AdoMet</note>
    </ligand>
</feature>
<feature type="binding site" evidence="1">
    <location>
        <position position="153"/>
    </location>
    <ligand>
        <name>[4Fe-4S] cluster</name>
        <dbReference type="ChEBI" id="CHEBI:49883"/>
        <label>2</label>
        <note>4Fe-4S-S-AdoMet</note>
    </ligand>
</feature>
<feature type="binding site" evidence="1">
    <location>
        <position position="156"/>
    </location>
    <ligand>
        <name>[4Fe-4S] cluster</name>
        <dbReference type="ChEBI" id="CHEBI:49883"/>
        <label>2</label>
        <note>4Fe-4S-S-AdoMet</note>
    </ligand>
</feature>
<name>RIMO_SULNB</name>
<evidence type="ECO:0000255" key="1">
    <source>
        <dbReference type="HAMAP-Rule" id="MF_01865"/>
    </source>
</evidence>
<evidence type="ECO:0000255" key="2">
    <source>
        <dbReference type="PROSITE-ProRule" id="PRU01266"/>
    </source>
</evidence>
<comment type="function">
    <text evidence="1">Catalyzes the methylthiolation of an aspartic acid residue of ribosomal protein uS12.</text>
</comment>
<comment type="catalytic activity">
    <reaction evidence="1">
        <text>L-aspartate(89)-[ribosomal protein uS12]-hydrogen + (sulfur carrier)-SH + AH2 + 2 S-adenosyl-L-methionine = 3-methylsulfanyl-L-aspartate(89)-[ribosomal protein uS12]-hydrogen + (sulfur carrier)-H + 5'-deoxyadenosine + L-methionine + A + S-adenosyl-L-homocysteine + 2 H(+)</text>
        <dbReference type="Rhea" id="RHEA:37087"/>
        <dbReference type="Rhea" id="RHEA-COMP:10460"/>
        <dbReference type="Rhea" id="RHEA-COMP:10461"/>
        <dbReference type="Rhea" id="RHEA-COMP:14737"/>
        <dbReference type="Rhea" id="RHEA-COMP:14739"/>
        <dbReference type="ChEBI" id="CHEBI:13193"/>
        <dbReference type="ChEBI" id="CHEBI:15378"/>
        <dbReference type="ChEBI" id="CHEBI:17319"/>
        <dbReference type="ChEBI" id="CHEBI:17499"/>
        <dbReference type="ChEBI" id="CHEBI:29917"/>
        <dbReference type="ChEBI" id="CHEBI:29961"/>
        <dbReference type="ChEBI" id="CHEBI:57844"/>
        <dbReference type="ChEBI" id="CHEBI:57856"/>
        <dbReference type="ChEBI" id="CHEBI:59789"/>
        <dbReference type="ChEBI" id="CHEBI:64428"/>
        <dbReference type="ChEBI" id="CHEBI:73599"/>
        <dbReference type="EC" id="2.8.4.4"/>
    </reaction>
</comment>
<comment type="cofactor">
    <cofactor evidence="1">
        <name>[4Fe-4S] cluster</name>
        <dbReference type="ChEBI" id="CHEBI:49883"/>
    </cofactor>
    <text evidence="1">Binds 2 [4Fe-4S] clusters. One cluster is coordinated with 3 cysteines and an exchangeable S-adenosyl-L-methionine.</text>
</comment>
<comment type="subcellular location">
    <subcellularLocation>
        <location evidence="1">Cytoplasm</location>
    </subcellularLocation>
</comment>
<comment type="similarity">
    <text evidence="1">Belongs to the methylthiotransferase family. RimO subfamily.</text>
</comment>
<sequence length="439" mass="49679">MPSRKKLHLISLGCTKNLVDSEVMLGRLKEYEITDDNTEADVIIVNTCGFIDAAKEESINTVLNLHDERKEDSILVMSGCLSERYKEELQQDMPEIDIFTGVGDYEKIDELIASKQSTFSPEVYLATETSGRVITGSNYHAYIKIAEGCNQACSFCAIPSFKGKLHSRSLSSIEKEVRMLAEQGYYDFSFISQDSSSYGRDMDLKDGLIDLIKVVEAIEGVRSARILYLYPSTTTFELIDTIADSKIFQTYYDMPIQHIDDAVLKTMKRGFGEQKTIELLEHMKSKPNAFLRTSVIAGHPGESQRSFEKLCSFMEEFGFDRFNTFHYSNEETTTAYQMEQIPQDIINERAEILGEIAERSTLRSLEKMVGKTVELVIDGESDEHEYLLSARPLQWAVDIDGEILINDTSDLPVKYGKVYEAKVTELVGMQLLATLIKEC</sequence>
<dbReference type="EC" id="2.8.4.4" evidence="1"/>
<dbReference type="EMBL" id="AP009179">
    <property type="protein sequence ID" value="BAF73135.1"/>
    <property type="molecule type" value="Genomic_DNA"/>
</dbReference>
<dbReference type="RefSeq" id="WP_012083968.1">
    <property type="nucleotide sequence ID" value="NC_009663.1"/>
</dbReference>
<dbReference type="SMR" id="A6QCC6"/>
<dbReference type="STRING" id="387093.SUN_2195"/>
<dbReference type="KEGG" id="sun:SUN_2195"/>
<dbReference type="eggNOG" id="COG0621">
    <property type="taxonomic scope" value="Bacteria"/>
</dbReference>
<dbReference type="HOGENOM" id="CLU_018697_0_1_7"/>
<dbReference type="OrthoDB" id="9805215at2"/>
<dbReference type="Proteomes" id="UP000006378">
    <property type="component" value="Chromosome"/>
</dbReference>
<dbReference type="GO" id="GO:0005829">
    <property type="term" value="C:cytosol"/>
    <property type="evidence" value="ECO:0007669"/>
    <property type="project" value="TreeGrafter"/>
</dbReference>
<dbReference type="GO" id="GO:0051539">
    <property type="term" value="F:4 iron, 4 sulfur cluster binding"/>
    <property type="evidence" value="ECO:0007669"/>
    <property type="project" value="UniProtKB-UniRule"/>
</dbReference>
<dbReference type="GO" id="GO:0035599">
    <property type="term" value="F:aspartic acid methylthiotransferase activity"/>
    <property type="evidence" value="ECO:0007669"/>
    <property type="project" value="TreeGrafter"/>
</dbReference>
<dbReference type="GO" id="GO:0046872">
    <property type="term" value="F:metal ion binding"/>
    <property type="evidence" value="ECO:0007669"/>
    <property type="project" value="UniProtKB-KW"/>
</dbReference>
<dbReference type="GO" id="GO:0103039">
    <property type="term" value="F:protein methylthiotransferase activity"/>
    <property type="evidence" value="ECO:0007669"/>
    <property type="project" value="UniProtKB-EC"/>
</dbReference>
<dbReference type="GO" id="GO:0006400">
    <property type="term" value="P:tRNA modification"/>
    <property type="evidence" value="ECO:0007669"/>
    <property type="project" value="InterPro"/>
</dbReference>
<dbReference type="CDD" id="cd01335">
    <property type="entry name" value="Radical_SAM"/>
    <property type="match status" value="1"/>
</dbReference>
<dbReference type="Gene3D" id="3.40.50.12160">
    <property type="entry name" value="Methylthiotransferase, N-terminal domain"/>
    <property type="match status" value="1"/>
</dbReference>
<dbReference type="Gene3D" id="2.40.50.140">
    <property type="entry name" value="Nucleic acid-binding proteins"/>
    <property type="match status" value="1"/>
</dbReference>
<dbReference type="Gene3D" id="3.80.30.20">
    <property type="entry name" value="tm_1862 like domain"/>
    <property type="match status" value="1"/>
</dbReference>
<dbReference type="HAMAP" id="MF_01865">
    <property type="entry name" value="MTTase_RimO"/>
    <property type="match status" value="1"/>
</dbReference>
<dbReference type="InterPro" id="IPR006638">
    <property type="entry name" value="Elp3/MiaA/NifB-like_rSAM"/>
</dbReference>
<dbReference type="InterPro" id="IPR005839">
    <property type="entry name" value="Methylthiotransferase"/>
</dbReference>
<dbReference type="InterPro" id="IPR020612">
    <property type="entry name" value="Methylthiotransferase_CS"/>
</dbReference>
<dbReference type="InterPro" id="IPR013848">
    <property type="entry name" value="Methylthiotransferase_N"/>
</dbReference>
<dbReference type="InterPro" id="IPR038135">
    <property type="entry name" value="Methylthiotransferase_N_sf"/>
</dbReference>
<dbReference type="InterPro" id="IPR012340">
    <property type="entry name" value="NA-bd_OB-fold"/>
</dbReference>
<dbReference type="InterPro" id="IPR005840">
    <property type="entry name" value="Ribosomal_uS12_MeSTrfase_RimO"/>
</dbReference>
<dbReference type="InterPro" id="IPR007197">
    <property type="entry name" value="rSAM"/>
</dbReference>
<dbReference type="InterPro" id="IPR023404">
    <property type="entry name" value="rSAM_horseshoe"/>
</dbReference>
<dbReference type="InterPro" id="IPR002792">
    <property type="entry name" value="TRAM_dom"/>
</dbReference>
<dbReference type="NCBIfam" id="TIGR01125">
    <property type="entry name" value="30S ribosomal protein S12 methylthiotransferase RimO"/>
    <property type="match status" value="1"/>
</dbReference>
<dbReference type="NCBIfam" id="TIGR00089">
    <property type="entry name" value="MiaB/RimO family radical SAM methylthiotransferase"/>
    <property type="match status" value="1"/>
</dbReference>
<dbReference type="PANTHER" id="PTHR43837">
    <property type="entry name" value="RIBOSOMAL PROTEIN S12 METHYLTHIOTRANSFERASE RIMO"/>
    <property type="match status" value="1"/>
</dbReference>
<dbReference type="PANTHER" id="PTHR43837:SF1">
    <property type="entry name" value="RIBOSOMAL PROTEIN US12 METHYLTHIOTRANSFERASE RIMO"/>
    <property type="match status" value="1"/>
</dbReference>
<dbReference type="Pfam" id="PF04055">
    <property type="entry name" value="Radical_SAM"/>
    <property type="match status" value="1"/>
</dbReference>
<dbReference type="Pfam" id="PF18693">
    <property type="entry name" value="TRAM_2"/>
    <property type="match status" value="1"/>
</dbReference>
<dbReference type="Pfam" id="PF00919">
    <property type="entry name" value="UPF0004"/>
    <property type="match status" value="1"/>
</dbReference>
<dbReference type="SFLD" id="SFLDG01082">
    <property type="entry name" value="B12-binding_domain_containing"/>
    <property type="match status" value="1"/>
</dbReference>
<dbReference type="SFLD" id="SFLDG01061">
    <property type="entry name" value="methylthiotransferase"/>
    <property type="match status" value="1"/>
</dbReference>
<dbReference type="SFLD" id="SFLDF00274">
    <property type="entry name" value="ribosomal_protein_S12_methylth"/>
    <property type="match status" value="1"/>
</dbReference>
<dbReference type="SMART" id="SM00729">
    <property type="entry name" value="Elp3"/>
    <property type="match status" value="1"/>
</dbReference>
<dbReference type="SUPFAM" id="SSF102114">
    <property type="entry name" value="Radical SAM enzymes"/>
    <property type="match status" value="1"/>
</dbReference>
<dbReference type="PROSITE" id="PS51449">
    <property type="entry name" value="MTTASE_N"/>
    <property type="match status" value="1"/>
</dbReference>
<dbReference type="PROSITE" id="PS01278">
    <property type="entry name" value="MTTASE_RADICAL"/>
    <property type="match status" value="1"/>
</dbReference>
<dbReference type="PROSITE" id="PS51918">
    <property type="entry name" value="RADICAL_SAM"/>
    <property type="match status" value="1"/>
</dbReference>
<gene>
    <name evidence="1" type="primary">rimO</name>
    <name type="ordered locus">SUN_2195</name>
</gene>
<organism>
    <name type="scientific">Sulfurovum sp. (strain NBC37-1)</name>
    <dbReference type="NCBI Taxonomy" id="387093"/>
    <lineage>
        <taxon>Bacteria</taxon>
        <taxon>Pseudomonadati</taxon>
        <taxon>Campylobacterota</taxon>
        <taxon>Epsilonproteobacteria</taxon>
        <taxon>Campylobacterales</taxon>
        <taxon>Sulfurovaceae</taxon>
        <taxon>Sulfurovum</taxon>
    </lineage>
</organism>
<accession>A6QCC6</accession>
<protein>
    <recommendedName>
        <fullName evidence="1">Ribosomal protein uS12 methylthiotransferase RimO</fullName>
        <shortName evidence="1">uS12 MTTase</shortName>
        <shortName evidence="1">uS12 methylthiotransferase</shortName>
        <ecNumber evidence="1">2.8.4.4</ecNumber>
    </recommendedName>
    <alternativeName>
        <fullName evidence="1">Ribosomal protein uS12 (aspartate-C(3))-methylthiotransferase</fullName>
    </alternativeName>
    <alternativeName>
        <fullName evidence="1">Ribosome maturation factor RimO</fullName>
    </alternativeName>
</protein>
<reference key="1">
    <citation type="journal article" date="2007" name="Proc. Natl. Acad. Sci. U.S.A.">
        <title>Deep-sea vent epsilon-proteobacterial genomes provide insights into emergence of pathogens.</title>
        <authorList>
            <person name="Nakagawa S."/>
            <person name="Takaki Y."/>
            <person name="Shimamura S."/>
            <person name="Reysenbach A.-L."/>
            <person name="Takai K."/>
            <person name="Horikoshi K."/>
        </authorList>
    </citation>
    <scope>NUCLEOTIDE SEQUENCE [LARGE SCALE GENOMIC DNA]</scope>
    <source>
        <strain>NBC37-1</strain>
    </source>
</reference>
<keyword id="KW-0004">4Fe-4S</keyword>
<keyword id="KW-0963">Cytoplasm</keyword>
<keyword id="KW-0408">Iron</keyword>
<keyword id="KW-0411">Iron-sulfur</keyword>
<keyword id="KW-0479">Metal-binding</keyword>
<keyword id="KW-0949">S-adenosyl-L-methionine</keyword>
<keyword id="KW-0808">Transferase</keyword>